<sequence>MYKPKISCLLLGLLSGLVFAPTFLLPALLTLSYLCCLVQKSKDWQEAAKLGYIFGFGHFLSGIYWISIGVSVYISDFWWAIPFALFGLPIILAFFVSASCVFSFFVRNNKYYHFIFCLYWVLFEWVRSWIFTGLPWNLIGYAFSFSDILIQSLNIIGIYGLSFIVIYISTSFYPFFTKQFDQLKVLLLTSSITLAVIITYGSVRLHNHPTNFTDIKVRLVQPSIPQTEKWSEEEFWHNLMLHINLSENSQPIDLVIWSEAALVVPYDIPVVKSELLGLLNSVDATLITGGISDNKKRGEDFELYTAMYALEKNGNKLFEYHKSHLVPFGEYMPFKKILPFKKLTHGFVDYTEGNGGLVYLDKYNLKIKPLICYESIFPDFVRTNNETADVIINVTNDAWYGKSSGPYQHFHISRSRAVENGLPMVRVANNGISAIIDPLGRVIKKLDLNEINYIDGLIPKKLDSPTIFSKFGNITILLIVFFIFLVNYLLDKKLINSRD</sequence>
<organism>
    <name type="scientific">Rickettsia bellii (strain RML369-C)</name>
    <dbReference type="NCBI Taxonomy" id="336407"/>
    <lineage>
        <taxon>Bacteria</taxon>
        <taxon>Pseudomonadati</taxon>
        <taxon>Pseudomonadota</taxon>
        <taxon>Alphaproteobacteria</taxon>
        <taxon>Rickettsiales</taxon>
        <taxon>Rickettsiaceae</taxon>
        <taxon>Rickettsieae</taxon>
        <taxon>Rickettsia</taxon>
        <taxon>belli group</taxon>
    </lineage>
</organism>
<protein>
    <recommendedName>
        <fullName evidence="1">Apolipoprotein N-acyltransferase</fullName>
        <shortName evidence="1">ALP N-acyltransferase</shortName>
        <ecNumber evidence="1">2.3.1.269</ecNumber>
    </recommendedName>
</protein>
<comment type="function">
    <text evidence="1">Catalyzes the phospholipid dependent N-acylation of the N-terminal cysteine of apolipoprotein, the last step in lipoprotein maturation.</text>
</comment>
<comment type="catalytic activity">
    <reaction evidence="1">
        <text>N-terminal S-1,2-diacyl-sn-glyceryl-L-cysteinyl-[lipoprotein] + a glycerophospholipid = N-acyl-S-1,2-diacyl-sn-glyceryl-L-cysteinyl-[lipoprotein] + a 2-acyl-sn-glycero-3-phospholipid + H(+)</text>
        <dbReference type="Rhea" id="RHEA:48228"/>
        <dbReference type="Rhea" id="RHEA-COMP:14681"/>
        <dbReference type="Rhea" id="RHEA-COMP:14684"/>
        <dbReference type="ChEBI" id="CHEBI:15378"/>
        <dbReference type="ChEBI" id="CHEBI:136912"/>
        <dbReference type="ChEBI" id="CHEBI:140656"/>
        <dbReference type="ChEBI" id="CHEBI:140657"/>
        <dbReference type="ChEBI" id="CHEBI:140660"/>
        <dbReference type="EC" id="2.3.1.269"/>
    </reaction>
</comment>
<comment type="pathway">
    <text evidence="1">Protein modification; lipoprotein biosynthesis (N-acyl transfer).</text>
</comment>
<comment type="subcellular location">
    <subcellularLocation>
        <location evidence="1">Cell inner membrane</location>
        <topology evidence="1">Multi-pass membrane protein</topology>
    </subcellularLocation>
</comment>
<comment type="similarity">
    <text evidence="1">Belongs to the CN hydrolase family. Apolipoprotein N-acyltransferase subfamily.</text>
</comment>
<dbReference type="EC" id="2.3.1.269" evidence="1"/>
<dbReference type="EMBL" id="CP000087">
    <property type="protein sequence ID" value="ABE05337.1"/>
    <property type="molecule type" value="Genomic_DNA"/>
</dbReference>
<dbReference type="RefSeq" id="WP_011477909.1">
    <property type="nucleotide sequence ID" value="NC_007940.1"/>
</dbReference>
<dbReference type="SMR" id="Q1RH27"/>
<dbReference type="KEGG" id="rbe:RBE_1256"/>
<dbReference type="eggNOG" id="COG0815">
    <property type="taxonomic scope" value="Bacteria"/>
</dbReference>
<dbReference type="HOGENOM" id="CLU_019563_3_1_5"/>
<dbReference type="OrthoDB" id="9804277at2"/>
<dbReference type="UniPathway" id="UPA00666"/>
<dbReference type="Proteomes" id="UP000001951">
    <property type="component" value="Chromosome"/>
</dbReference>
<dbReference type="GO" id="GO:0005886">
    <property type="term" value="C:plasma membrane"/>
    <property type="evidence" value="ECO:0007669"/>
    <property type="project" value="UniProtKB-SubCell"/>
</dbReference>
<dbReference type="GO" id="GO:0016410">
    <property type="term" value="F:N-acyltransferase activity"/>
    <property type="evidence" value="ECO:0007669"/>
    <property type="project" value="UniProtKB-UniRule"/>
</dbReference>
<dbReference type="GO" id="GO:0042158">
    <property type="term" value="P:lipoprotein biosynthetic process"/>
    <property type="evidence" value="ECO:0007669"/>
    <property type="project" value="UniProtKB-UniRule"/>
</dbReference>
<dbReference type="CDD" id="cd07571">
    <property type="entry name" value="ALP_N-acyl_transferase"/>
    <property type="match status" value="1"/>
</dbReference>
<dbReference type="Gene3D" id="3.60.110.10">
    <property type="entry name" value="Carbon-nitrogen hydrolase"/>
    <property type="match status" value="1"/>
</dbReference>
<dbReference type="HAMAP" id="MF_01148">
    <property type="entry name" value="Lnt"/>
    <property type="match status" value="1"/>
</dbReference>
<dbReference type="InterPro" id="IPR004563">
    <property type="entry name" value="Apolipo_AcylTrfase"/>
</dbReference>
<dbReference type="InterPro" id="IPR003010">
    <property type="entry name" value="C-N_Hydrolase"/>
</dbReference>
<dbReference type="InterPro" id="IPR036526">
    <property type="entry name" value="C-N_Hydrolase_sf"/>
</dbReference>
<dbReference type="InterPro" id="IPR045378">
    <property type="entry name" value="LNT_N"/>
</dbReference>
<dbReference type="NCBIfam" id="TIGR00546">
    <property type="entry name" value="lnt"/>
    <property type="match status" value="1"/>
</dbReference>
<dbReference type="PANTHER" id="PTHR38686">
    <property type="entry name" value="APOLIPOPROTEIN N-ACYLTRANSFERASE"/>
    <property type="match status" value="1"/>
</dbReference>
<dbReference type="PANTHER" id="PTHR38686:SF1">
    <property type="entry name" value="APOLIPOPROTEIN N-ACYLTRANSFERASE"/>
    <property type="match status" value="1"/>
</dbReference>
<dbReference type="Pfam" id="PF00795">
    <property type="entry name" value="CN_hydrolase"/>
    <property type="match status" value="1"/>
</dbReference>
<dbReference type="Pfam" id="PF20154">
    <property type="entry name" value="LNT_N"/>
    <property type="match status" value="1"/>
</dbReference>
<dbReference type="SUPFAM" id="SSF56317">
    <property type="entry name" value="Carbon-nitrogen hydrolase"/>
    <property type="match status" value="1"/>
</dbReference>
<dbReference type="PROSITE" id="PS50263">
    <property type="entry name" value="CN_HYDROLASE"/>
    <property type="match status" value="1"/>
</dbReference>
<feature type="chain" id="PRO_0000277923" description="Apolipoprotein N-acyltransferase">
    <location>
        <begin position="1"/>
        <end position="499"/>
    </location>
</feature>
<feature type="transmembrane region" description="Helical" evidence="1">
    <location>
        <begin position="9"/>
        <end position="29"/>
    </location>
</feature>
<feature type="transmembrane region" description="Helical" evidence="1">
    <location>
        <begin position="50"/>
        <end position="70"/>
    </location>
</feature>
<feature type="transmembrane region" description="Helical" evidence="1">
    <location>
        <begin position="77"/>
        <end position="97"/>
    </location>
</feature>
<feature type="transmembrane region" description="Helical" evidence="1">
    <location>
        <begin position="114"/>
        <end position="134"/>
    </location>
</feature>
<feature type="transmembrane region" description="Helical" evidence="1">
    <location>
        <begin position="148"/>
        <end position="168"/>
    </location>
</feature>
<feature type="transmembrane region" description="Helical" evidence="1">
    <location>
        <begin position="183"/>
        <end position="203"/>
    </location>
</feature>
<feature type="transmembrane region" description="Helical" evidence="1">
    <location>
        <begin position="466"/>
        <end position="486"/>
    </location>
</feature>
<feature type="domain" description="CN hydrolase" evidence="1">
    <location>
        <begin position="220"/>
        <end position="464"/>
    </location>
</feature>
<feature type="active site" description="Proton acceptor" evidence="1">
    <location>
        <position position="259"/>
    </location>
</feature>
<feature type="active site" evidence="1">
    <location>
        <position position="322"/>
    </location>
</feature>
<feature type="active site" description="Nucleophile" evidence="1">
    <location>
        <position position="372"/>
    </location>
</feature>
<reference key="1">
    <citation type="journal article" date="2006" name="PLoS Genet.">
        <title>Genome sequence of Rickettsia bellii illuminates the role of amoebae in gene exchanges between intracellular pathogens.</title>
        <authorList>
            <person name="Ogata H."/>
            <person name="La Scola B."/>
            <person name="Audic S."/>
            <person name="Renesto P."/>
            <person name="Blanc G."/>
            <person name="Robert C."/>
            <person name="Fournier P.-E."/>
            <person name="Claverie J.-M."/>
            <person name="Raoult D."/>
        </authorList>
    </citation>
    <scope>NUCLEOTIDE SEQUENCE [LARGE SCALE GENOMIC DNA]</scope>
    <source>
        <strain>RML369-C</strain>
    </source>
</reference>
<accession>Q1RH27</accession>
<gene>
    <name evidence="1" type="primary">lnt</name>
    <name type="ordered locus">RBE_1256</name>
</gene>
<name>LNT_RICBR</name>
<proteinExistence type="inferred from homology"/>
<keyword id="KW-0012">Acyltransferase</keyword>
<keyword id="KW-0997">Cell inner membrane</keyword>
<keyword id="KW-1003">Cell membrane</keyword>
<keyword id="KW-0472">Membrane</keyword>
<keyword id="KW-0808">Transferase</keyword>
<keyword id="KW-0812">Transmembrane</keyword>
<keyword id="KW-1133">Transmembrane helix</keyword>
<evidence type="ECO:0000255" key="1">
    <source>
        <dbReference type="HAMAP-Rule" id="MF_01148"/>
    </source>
</evidence>